<sequence length="481" mass="54303">MARTGAEYIEALKTRPPNLWYKGEKVEDPTTHPVFRGIVRTMAALYDLQHDPRYREVLTYEEEGKRHGMSFLIPKTKEDLKRRGQAYKLWADQNLGMMGRSPDYLNAVVMAYAASADYFGEFAENVRNYYRYLRDQDLATTHALTNPQVNRARPPSGQPDPYIPVGVVKQTEKGIVVRGARMTATFPLADEVLIFPSTLLQAGSEKYALAFALPTSTPGLHFVCREALVGGDSPFDHPLSSRVEEMDCLVIFDDVLVPWERVFILGNVELCNNAYAATGALNHMAHQVVALKTAKTEAFLGVAALMAEGIGADVYGHVQEKIAEIIVYLEAMRAFWTRAEEEAKENAYGLLVPDRGALDGARNLYPRLYPRIREILEQIGASGLITLPSEKDFKGPLGPFLEKFLQGAALEAKERVALFRLAWDMTLSGFGARQELYERFFFGDPVRMYQTLYNVYNKEPYKERIRAFLKESLKVFEEVQA</sequence>
<reference key="1">
    <citation type="submission" date="2004-11" db="EMBL/GenBank/DDBJ databases">
        <title>Complete genome sequence of Thermus thermophilus HB8.</title>
        <authorList>
            <person name="Masui R."/>
            <person name="Kurokawa K."/>
            <person name="Nakagawa N."/>
            <person name="Tokunaga F."/>
            <person name="Koyama Y."/>
            <person name="Shibata T."/>
            <person name="Oshima T."/>
            <person name="Yokoyama S."/>
            <person name="Yasunaga T."/>
            <person name="Kuramitsu S."/>
        </authorList>
    </citation>
    <scope>NUCLEOTIDE SEQUENCE [LARGE SCALE GENOMIC DNA]</scope>
    <source>
        <strain>ATCC 27634 / DSM 579 / HB8</strain>
    </source>
</reference>
<reference key="2">
    <citation type="journal article" date="2007" name="J. Biol. Chem.">
        <title>Crystal structure of the oxygenase component (hpaB) of the 4-hydroxyphenylacetate 3-monooxygenase from Thermus thermophilus HB8.</title>
        <authorList>
            <person name="Kim S.-H."/>
            <person name="Hisano T."/>
            <person name="Takeda K."/>
            <person name="Iwasaki W."/>
            <person name="Ebihara A."/>
            <person name="Miki K."/>
        </authorList>
    </citation>
    <scope>X-RAY CRYSTALLOGRAPHY (2.0 ANGSTROMS) IN COMPLEX WITH SUBSTRATE AND FAD</scope>
    <scope>FUNCTION</scope>
    <scope>CATALYTIC ACTIVITY</scope>
    <scope>REACTION MECHANISM</scope>
    <scope>SUBUNIT</scope>
</reference>
<organism>
    <name type="scientific">Thermus thermophilus (strain ATCC 27634 / DSM 579 / HB8)</name>
    <dbReference type="NCBI Taxonomy" id="300852"/>
    <lineage>
        <taxon>Bacteria</taxon>
        <taxon>Thermotogati</taxon>
        <taxon>Deinococcota</taxon>
        <taxon>Deinococci</taxon>
        <taxon>Thermales</taxon>
        <taxon>Thermaceae</taxon>
        <taxon>Thermus</taxon>
    </lineage>
</organism>
<name>HPAB_THET8</name>
<dbReference type="EC" id="1.14.14.9"/>
<dbReference type="EMBL" id="AP008226">
    <property type="protein sequence ID" value="BAD70783.1"/>
    <property type="molecule type" value="Genomic_DNA"/>
</dbReference>
<dbReference type="RefSeq" id="YP_144226.1">
    <property type="nucleotide sequence ID" value="NC_006461.1"/>
</dbReference>
<dbReference type="PDB" id="2YYG">
    <property type="method" value="X-ray"/>
    <property type="resolution" value="2.00 A"/>
    <property type="chains" value="A=1-481"/>
</dbReference>
<dbReference type="PDB" id="2YYI">
    <property type="method" value="X-ray"/>
    <property type="resolution" value="1.66 A"/>
    <property type="chains" value="A=1-481"/>
</dbReference>
<dbReference type="PDB" id="2YYJ">
    <property type="method" value="X-ray"/>
    <property type="resolution" value="1.66 A"/>
    <property type="chains" value="A=1-481"/>
</dbReference>
<dbReference type="PDB" id="2YYK">
    <property type="method" value="X-ray"/>
    <property type="resolution" value="1.60 A"/>
    <property type="chains" value="A=1-481"/>
</dbReference>
<dbReference type="PDB" id="2YYL">
    <property type="method" value="X-ray"/>
    <property type="resolution" value="1.75 A"/>
    <property type="chains" value="A=1-481"/>
</dbReference>
<dbReference type="PDB" id="2YYM">
    <property type="method" value="X-ray"/>
    <property type="resolution" value="1.70 A"/>
    <property type="chains" value="A=1-481"/>
</dbReference>
<dbReference type="PDBsum" id="2YYG"/>
<dbReference type="PDBsum" id="2YYI"/>
<dbReference type="PDBsum" id="2YYJ"/>
<dbReference type="PDBsum" id="2YYK"/>
<dbReference type="PDBsum" id="2YYL"/>
<dbReference type="PDBsum" id="2YYM"/>
<dbReference type="SMR" id="Q5SJP8"/>
<dbReference type="EnsemblBacteria" id="BAD70783">
    <property type="protein sequence ID" value="BAD70783"/>
    <property type="gene ID" value="BAD70783"/>
</dbReference>
<dbReference type="GeneID" id="3170066"/>
<dbReference type="KEGG" id="ttj:TTHA0960"/>
<dbReference type="PATRIC" id="fig|300852.9.peg.942"/>
<dbReference type="eggNOG" id="COG2368">
    <property type="taxonomic scope" value="Bacteria"/>
</dbReference>
<dbReference type="HOGENOM" id="CLU_023920_2_1_0"/>
<dbReference type="PhylomeDB" id="Q5SJP8"/>
<dbReference type="BRENDA" id="1.14.14.9">
    <property type="organism ID" value="2305"/>
</dbReference>
<dbReference type="UniPathway" id="UPA00208">
    <property type="reaction ID" value="UER00416"/>
</dbReference>
<dbReference type="EvolutionaryTrace" id="Q5SJP8"/>
<dbReference type="Proteomes" id="UP000000532">
    <property type="component" value="Chromosome"/>
</dbReference>
<dbReference type="GO" id="GO:0052881">
    <property type="term" value="F:4-hydroxyphenylacetate 3-monooxygenase activity"/>
    <property type="evidence" value="ECO:0007669"/>
    <property type="project" value="UniProtKB-EC"/>
</dbReference>
<dbReference type="GO" id="GO:0050660">
    <property type="term" value="F:flavin adenine dinucleotide binding"/>
    <property type="evidence" value="ECO:0007669"/>
    <property type="project" value="InterPro"/>
</dbReference>
<dbReference type="GO" id="GO:0016627">
    <property type="term" value="F:oxidoreductase activity, acting on the CH-CH group of donors"/>
    <property type="evidence" value="ECO:0007669"/>
    <property type="project" value="InterPro"/>
</dbReference>
<dbReference type="GO" id="GO:0010124">
    <property type="term" value="P:phenylacetate catabolic process"/>
    <property type="evidence" value="ECO:0007669"/>
    <property type="project" value="InterPro"/>
</dbReference>
<dbReference type="Gene3D" id="1.10.3140.10">
    <property type="entry name" value="4-hydroxybutyryl-coa dehydratase, domain 1"/>
    <property type="match status" value="1"/>
</dbReference>
<dbReference type="Gene3D" id="2.40.110.10">
    <property type="entry name" value="Butyryl-CoA Dehydrogenase, subunit A, domain 2"/>
    <property type="match status" value="1"/>
</dbReference>
<dbReference type="Gene3D" id="1.20.140.10">
    <property type="entry name" value="Butyryl-CoA Dehydrogenase, subunit A, domain 3"/>
    <property type="match status" value="1"/>
</dbReference>
<dbReference type="InterPro" id="IPR046373">
    <property type="entry name" value="Acyl-CoA_Oxase/DH_mid-dom_sf"/>
</dbReference>
<dbReference type="InterPro" id="IPR036250">
    <property type="entry name" value="AcylCo_DH-like_C"/>
</dbReference>
<dbReference type="InterPro" id="IPR009100">
    <property type="entry name" value="AcylCoA_DH/oxidase_NM_dom_sf"/>
</dbReference>
<dbReference type="InterPro" id="IPR004925">
    <property type="entry name" value="HpaB/PvcC/4-BUDH"/>
</dbReference>
<dbReference type="InterPro" id="IPR024719">
    <property type="entry name" value="HpaB/PvcC/4-BUDH_C"/>
</dbReference>
<dbReference type="InterPro" id="IPR024674">
    <property type="entry name" value="HpaB/PvcC/4-BUDH_N"/>
</dbReference>
<dbReference type="InterPro" id="IPR012687">
    <property type="entry name" value="HpaB_Deino-type"/>
</dbReference>
<dbReference type="NCBIfam" id="TIGR02309">
    <property type="entry name" value="HpaB-1"/>
    <property type="match status" value="1"/>
</dbReference>
<dbReference type="PANTHER" id="PTHR36117">
    <property type="entry name" value="4-HYDROXYPHENYLACETATE 3-MONOOXYGENASE-RELATED"/>
    <property type="match status" value="1"/>
</dbReference>
<dbReference type="PANTHER" id="PTHR36117:SF3">
    <property type="entry name" value="4-HYDROXYPHENYLACETATE 3-MONOOXYGENASE-RELATED"/>
    <property type="match status" value="1"/>
</dbReference>
<dbReference type="Pfam" id="PF03241">
    <property type="entry name" value="HpaB"/>
    <property type="match status" value="1"/>
</dbReference>
<dbReference type="Pfam" id="PF11794">
    <property type="entry name" value="HpaB_N"/>
    <property type="match status" value="1"/>
</dbReference>
<dbReference type="PIRSF" id="PIRSF000331">
    <property type="entry name" value="HpaA_HpaB"/>
    <property type="match status" value="1"/>
</dbReference>
<dbReference type="SUPFAM" id="SSF47203">
    <property type="entry name" value="Acyl-CoA dehydrogenase C-terminal domain-like"/>
    <property type="match status" value="1"/>
</dbReference>
<dbReference type="SUPFAM" id="SSF56645">
    <property type="entry name" value="Acyl-CoA dehydrogenase NM domain-like"/>
    <property type="match status" value="1"/>
</dbReference>
<gene>
    <name type="ordered locus">TTHA0960</name>
</gene>
<keyword id="KW-0002">3D-structure</keyword>
<keyword id="KW-0058">Aromatic hydrocarbons catabolism</keyword>
<keyword id="KW-0274">FAD</keyword>
<keyword id="KW-0285">Flavoprotein</keyword>
<keyword id="KW-0503">Monooxygenase</keyword>
<keyword id="KW-0560">Oxidoreductase</keyword>
<keyword id="KW-1185">Reference proteome</keyword>
<protein>
    <recommendedName>
        <fullName>4-hydroxyphenylacetate 3-monooxygenase oxygenase component</fullName>
        <ecNumber>1.14.14.9</ecNumber>
    </recommendedName>
    <alternativeName>
        <fullName>4-HPA 3-hydroxylase</fullName>
    </alternativeName>
    <alternativeName>
        <fullName>4-HPA 3-monooxygenase large component</fullName>
    </alternativeName>
</protein>
<proteinExistence type="evidence at protein level"/>
<comment type="function">
    <text evidence="1">Utilizes FADH(2) supplied by HpaC, to catalyze the hydroxylation of 4-hydroxyphenylacetic acid, leading to the production of 3,4-dihydroxyphenylacetic acid (DHPA).</text>
</comment>
<comment type="catalytic activity">
    <reaction evidence="1">
        <text>4-hydroxyphenylacetate + FADH2 + O2 = 3,4-dihydroxyphenylacetate + FAD + H2O + H(+)</text>
        <dbReference type="Rhea" id="RHEA:30595"/>
        <dbReference type="ChEBI" id="CHEBI:15377"/>
        <dbReference type="ChEBI" id="CHEBI:15378"/>
        <dbReference type="ChEBI" id="CHEBI:15379"/>
        <dbReference type="ChEBI" id="CHEBI:17612"/>
        <dbReference type="ChEBI" id="CHEBI:48999"/>
        <dbReference type="ChEBI" id="CHEBI:57692"/>
        <dbReference type="ChEBI" id="CHEBI:58307"/>
        <dbReference type="EC" id="1.14.14.9"/>
    </reaction>
</comment>
<comment type="pathway">
    <text>Aromatic compound metabolism; 4-hydroxyphenylacetate degradation; pyruvate and succinate semialdehyde from 4-hydroxyphenylacetate: step 1/7.</text>
</comment>
<comment type="subunit">
    <text evidence="1">Homotetramer consisting of a dimer of dimers. 4-HPA 3-monooxygenase consists of a reductase component HpaC and an oxygenase component HpaB.</text>
</comment>
<comment type="similarity">
    <text evidence="2">Belongs to the FADH(2)-utilizing monooxygenase family.</text>
</comment>
<accession>Q5SJP8</accession>
<evidence type="ECO:0000269" key="1">
    <source>
    </source>
</evidence>
<evidence type="ECO:0000305" key="2"/>
<evidence type="ECO:0007829" key="3">
    <source>
        <dbReference type="PDB" id="2YYI"/>
    </source>
</evidence>
<evidence type="ECO:0007829" key="4">
    <source>
        <dbReference type="PDB" id="2YYJ"/>
    </source>
</evidence>
<evidence type="ECO:0007829" key="5">
    <source>
        <dbReference type="PDB" id="2YYK"/>
    </source>
</evidence>
<feature type="chain" id="PRO_0000387994" description="4-hydroxyphenylacetate 3-monooxygenase oxygenase component">
    <location>
        <begin position="1"/>
        <end position="481"/>
    </location>
</feature>
<feature type="binding site">
    <location>
        <begin position="100"/>
        <end position="104"/>
    </location>
    <ligand>
        <name>substrate</name>
    </ligand>
</feature>
<feature type="binding site" evidence="1">
    <location>
        <begin position="142"/>
        <end position="144"/>
    </location>
    <ligand>
        <name>FAD</name>
        <dbReference type="ChEBI" id="CHEBI:57692"/>
    </ligand>
</feature>
<feature type="binding site" evidence="1">
    <location>
        <position position="142"/>
    </location>
    <ligand>
        <name>substrate</name>
    </ligand>
</feature>
<feature type="binding site" evidence="1">
    <location>
        <begin position="148"/>
        <end position="151"/>
    </location>
    <ligand>
        <name>FAD</name>
        <dbReference type="ChEBI" id="CHEBI:57692"/>
    </ligand>
</feature>
<feature type="binding site" evidence="1">
    <location>
        <position position="185"/>
    </location>
    <ligand>
        <name>FAD</name>
        <dbReference type="ChEBI" id="CHEBI:57692"/>
    </ligand>
</feature>
<feature type="binding site">
    <location>
        <begin position="197"/>
        <end position="198"/>
    </location>
    <ligand>
        <name>substrate</name>
    </ligand>
</feature>
<feature type="binding site" evidence="1">
    <location>
        <begin position="444"/>
        <end position="447"/>
    </location>
    <ligand>
        <name>FAD</name>
        <dbReference type="ChEBI" id="CHEBI:57692"/>
    </ligand>
</feature>
<feature type="helix" evidence="5">
    <location>
        <begin position="5"/>
        <end position="14"/>
    </location>
</feature>
<feature type="strand" evidence="5">
    <location>
        <begin position="19"/>
        <end position="21"/>
    </location>
</feature>
<feature type="turn" evidence="5">
    <location>
        <begin position="29"/>
        <end position="31"/>
    </location>
</feature>
<feature type="turn" evidence="5">
    <location>
        <begin position="33"/>
        <end position="35"/>
    </location>
</feature>
<feature type="helix" evidence="5">
    <location>
        <begin position="36"/>
        <end position="48"/>
    </location>
</feature>
<feature type="turn" evidence="5">
    <location>
        <begin position="52"/>
        <end position="54"/>
    </location>
</feature>
<feature type="helix" evidence="5">
    <location>
        <begin position="55"/>
        <end position="58"/>
    </location>
</feature>
<feature type="strand" evidence="5">
    <location>
        <begin position="59"/>
        <end position="62"/>
    </location>
</feature>
<feature type="strand" evidence="5">
    <location>
        <begin position="65"/>
        <end position="68"/>
    </location>
</feature>
<feature type="helix" evidence="5">
    <location>
        <begin position="69"/>
        <end position="71"/>
    </location>
</feature>
<feature type="helix" evidence="5">
    <location>
        <begin position="77"/>
        <end position="93"/>
    </location>
</feature>
<feature type="turn" evidence="5">
    <location>
        <begin position="94"/>
        <end position="96"/>
    </location>
</feature>
<feature type="helix" evidence="5">
    <location>
        <begin position="103"/>
        <end position="114"/>
    </location>
</feature>
<feature type="helix" evidence="5">
    <location>
        <begin position="116"/>
        <end position="122"/>
    </location>
</feature>
<feature type="helix" evidence="5">
    <location>
        <begin position="123"/>
        <end position="136"/>
    </location>
</feature>
<feature type="strand" evidence="5">
    <location>
        <begin position="140"/>
        <end position="144"/>
    </location>
</feature>
<feature type="helix" evidence="3">
    <location>
        <begin position="155"/>
        <end position="157"/>
    </location>
</feature>
<feature type="strand" evidence="3">
    <location>
        <begin position="158"/>
        <end position="160"/>
    </location>
</feature>
<feature type="strand" evidence="5">
    <location>
        <begin position="166"/>
        <end position="170"/>
    </location>
</feature>
<feature type="strand" evidence="5">
    <location>
        <begin position="172"/>
        <end position="185"/>
    </location>
</feature>
<feature type="strand" evidence="5">
    <location>
        <begin position="189"/>
        <end position="194"/>
    </location>
</feature>
<feature type="strand" evidence="4">
    <location>
        <begin position="198"/>
        <end position="200"/>
    </location>
</feature>
<feature type="helix" evidence="5">
    <location>
        <begin position="205"/>
        <end position="207"/>
    </location>
</feature>
<feature type="strand" evidence="5">
    <location>
        <begin position="209"/>
        <end position="214"/>
    </location>
</feature>
<feature type="strand" evidence="5">
    <location>
        <begin position="220"/>
        <end position="224"/>
    </location>
</feature>
<feature type="turn" evidence="5">
    <location>
        <begin position="234"/>
        <end position="236"/>
    </location>
</feature>
<feature type="turn" evidence="5">
    <location>
        <begin position="238"/>
        <end position="242"/>
    </location>
</feature>
<feature type="strand" evidence="5">
    <location>
        <begin position="247"/>
        <end position="258"/>
    </location>
</feature>
<feature type="helix" evidence="5">
    <location>
        <begin position="259"/>
        <end position="261"/>
    </location>
</feature>
<feature type="strand" evidence="5">
    <location>
        <begin position="262"/>
        <end position="266"/>
    </location>
</feature>
<feature type="helix" evidence="5">
    <location>
        <begin position="268"/>
        <end position="278"/>
    </location>
</feature>
<feature type="helix" evidence="5">
    <location>
        <begin position="280"/>
        <end position="309"/>
    </location>
</feature>
<feature type="helix" evidence="5">
    <location>
        <begin position="312"/>
        <end position="314"/>
    </location>
</feature>
<feature type="helix" evidence="5">
    <location>
        <begin position="316"/>
        <end position="341"/>
    </location>
</feature>
<feature type="helix" evidence="5">
    <location>
        <begin position="355"/>
        <end position="380"/>
    </location>
</feature>
<feature type="helix" evidence="5">
    <location>
        <begin position="381"/>
        <end position="384"/>
    </location>
</feature>
<feature type="helix" evidence="5">
    <location>
        <begin position="390"/>
        <end position="394"/>
    </location>
</feature>
<feature type="helix" evidence="5">
    <location>
        <begin position="398"/>
        <end position="404"/>
    </location>
</feature>
<feature type="strand" evidence="4">
    <location>
        <begin position="408"/>
        <end position="410"/>
    </location>
</feature>
<feature type="helix" evidence="5">
    <location>
        <begin position="412"/>
        <end position="424"/>
    </location>
</feature>
<feature type="turn" evidence="5">
    <location>
        <begin position="425"/>
        <end position="427"/>
    </location>
</feature>
<feature type="helix" evidence="5">
    <location>
        <begin position="429"/>
        <end position="440"/>
    </location>
</feature>
<feature type="helix" evidence="5">
    <location>
        <begin position="445"/>
        <end position="455"/>
    </location>
</feature>
<feature type="helix" evidence="5">
    <location>
        <begin position="459"/>
        <end position="468"/>
    </location>
</feature>
<feature type="helix" evidence="5">
    <location>
        <begin position="470"/>
        <end position="473"/>
    </location>
</feature>
<feature type="helix" evidence="5">
    <location>
        <begin position="474"/>
        <end position="476"/>
    </location>
</feature>